<dbReference type="EMBL" id="AF177398">
    <property type="protein sequence ID" value="AAF02678.1"/>
    <property type="molecule type" value="mRNA"/>
</dbReference>
<dbReference type="EMBL" id="AB047818">
    <property type="protein sequence ID" value="BAB12400.1"/>
    <property type="molecule type" value="Genomic_DNA"/>
</dbReference>
<dbReference type="EMBL" id="AY358922">
    <property type="protein sequence ID" value="AAQ89281.1"/>
    <property type="molecule type" value="mRNA"/>
</dbReference>
<dbReference type="EMBL" id="BC030581">
    <property type="protein sequence ID" value="AAH30581.1"/>
    <property type="molecule type" value="mRNA"/>
</dbReference>
<dbReference type="CCDS" id="CCDS12762.1"/>
<dbReference type="RefSeq" id="NP_001184230.1">
    <property type="nucleotide sequence ID" value="NM_001197301.1"/>
</dbReference>
<dbReference type="RefSeq" id="NP_001184231.1">
    <property type="nucleotide sequence ID" value="NM_001197302.1"/>
</dbReference>
<dbReference type="RefSeq" id="NP_055234.1">
    <property type="nucleotide sequence ID" value="NM_014419.4"/>
</dbReference>
<dbReference type="BioGRID" id="118011">
    <property type="interactions" value="118"/>
</dbReference>
<dbReference type="FunCoup" id="Q9UK85">
    <property type="interactions" value="96"/>
</dbReference>
<dbReference type="IntAct" id="Q9UK85">
    <property type="interactions" value="112"/>
</dbReference>
<dbReference type="STRING" id="9606.ENSP00000221498"/>
<dbReference type="GlyCosmos" id="Q9UK85">
    <property type="glycosylation" value="2 sites, No reported glycans"/>
</dbReference>
<dbReference type="GlyGen" id="Q9UK85">
    <property type="glycosylation" value="2 sites, 1 N-linked glycan (1 site)"/>
</dbReference>
<dbReference type="iPTMnet" id="Q9UK85"/>
<dbReference type="PhosphoSitePlus" id="Q9UK85"/>
<dbReference type="BioMuta" id="DKKL1"/>
<dbReference type="DMDM" id="13124528"/>
<dbReference type="jPOST" id="Q9UK85"/>
<dbReference type="MassIVE" id="Q9UK85"/>
<dbReference type="PaxDb" id="9606-ENSP00000221498"/>
<dbReference type="PeptideAtlas" id="Q9UK85"/>
<dbReference type="ProteomicsDB" id="84740"/>
<dbReference type="Antibodypedia" id="31990">
    <property type="antibodies" value="266 antibodies from 26 providers"/>
</dbReference>
<dbReference type="DNASU" id="27120"/>
<dbReference type="Ensembl" id="ENST00000221498.7">
    <property type="protein sequence ID" value="ENSP00000221498.1"/>
    <property type="gene ID" value="ENSG00000104901.7"/>
</dbReference>
<dbReference type="GeneID" id="27120"/>
<dbReference type="KEGG" id="hsa:27120"/>
<dbReference type="MANE-Select" id="ENST00000221498.7">
    <property type="protein sequence ID" value="ENSP00000221498.1"/>
    <property type="RefSeq nucleotide sequence ID" value="NM_014419.4"/>
    <property type="RefSeq protein sequence ID" value="NP_055234.1"/>
</dbReference>
<dbReference type="UCSC" id="uc002pnk.4">
    <property type="organism name" value="human"/>
</dbReference>
<dbReference type="AGR" id="HGNC:16528"/>
<dbReference type="CTD" id="27120"/>
<dbReference type="DisGeNET" id="27120"/>
<dbReference type="GeneCards" id="DKKL1"/>
<dbReference type="HGNC" id="HGNC:16528">
    <property type="gene designation" value="DKKL1"/>
</dbReference>
<dbReference type="HPA" id="ENSG00000104901">
    <property type="expression patterns" value="Tissue enriched (testis)"/>
</dbReference>
<dbReference type="MIM" id="605418">
    <property type="type" value="gene"/>
</dbReference>
<dbReference type="neXtProt" id="NX_Q9UK85"/>
<dbReference type="OpenTargets" id="ENSG00000104901"/>
<dbReference type="PharmGKB" id="PA134974559"/>
<dbReference type="VEuPathDB" id="HostDB:ENSG00000104901"/>
<dbReference type="eggNOG" id="ENOG502SZ2Z">
    <property type="taxonomic scope" value="Eukaryota"/>
</dbReference>
<dbReference type="GeneTree" id="ENSGT00390000014026"/>
<dbReference type="InParanoid" id="Q9UK85"/>
<dbReference type="OMA" id="APEGSHW"/>
<dbReference type="OrthoDB" id="6359792at2759"/>
<dbReference type="PAN-GO" id="Q9UK85">
    <property type="GO annotations" value="4 GO annotations based on evolutionary models"/>
</dbReference>
<dbReference type="PhylomeDB" id="Q9UK85"/>
<dbReference type="TreeFam" id="TF337340"/>
<dbReference type="PathwayCommons" id="Q9UK85"/>
<dbReference type="SignaLink" id="Q9UK85"/>
<dbReference type="BioGRID-ORCS" id="27120">
    <property type="hits" value="10 hits in 1144 CRISPR screens"/>
</dbReference>
<dbReference type="GenomeRNAi" id="27120"/>
<dbReference type="Pharos" id="Q9UK85">
    <property type="development level" value="Tbio"/>
</dbReference>
<dbReference type="PRO" id="PR:Q9UK85"/>
<dbReference type="Proteomes" id="UP000005640">
    <property type="component" value="Chromosome 19"/>
</dbReference>
<dbReference type="RNAct" id="Q9UK85">
    <property type="molecule type" value="protein"/>
</dbReference>
<dbReference type="Bgee" id="ENSG00000104901">
    <property type="expression patterns" value="Expressed in left testis and 128 other cell types or tissues"/>
</dbReference>
<dbReference type="ExpressionAtlas" id="Q9UK85">
    <property type="expression patterns" value="baseline and differential"/>
</dbReference>
<dbReference type="GO" id="GO:0001669">
    <property type="term" value="C:acrosomal vesicle"/>
    <property type="evidence" value="ECO:0000250"/>
    <property type="project" value="UniProtKB"/>
</dbReference>
<dbReference type="GO" id="GO:0005615">
    <property type="term" value="C:extracellular space"/>
    <property type="evidence" value="ECO:0000318"/>
    <property type="project" value="GO_Central"/>
</dbReference>
<dbReference type="GO" id="GO:0039706">
    <property type="term" value="F:co-receptor binding"/>
    <property type="evidence" value="ECO:0000318"/>
    <property type="project" value="GO_Central"/>
</dbReference>
<dbReference type="GO" id="GO:0048019">
    <property type="term" value="F:receptor antagonist activity"/>
    <property type="evidence" value="ECO:0000318"/>
    <property type="project" value="GO_Central"/>
</dbReference>
<dbReference type="GO" id="GO:0009653">
    <property type="term" value="P:anatomical structure morphogenesis"/>
    <property type="evidence" value="ECO:0000304"/>
    <property type="project" value="ProtInc"/>
</dbReference>
<dbReference type="GO" id="GO:0060070">
    <property type="term" value="P:canonical Wnt signaling pathway"/>
    <property type="evidence" value="ECO:0007669"/>
    <property type="project" value="Ensembl"/>
</dbReference>
<dbReference type="GO" id="GO:0090090">
    <property type="term" value="P:negative regulation of canonical Wnt signaling pathway"/>
    <property type="evidence" value="ECO:0000318"/>
    <property type="project" value="GO_Central"/>
</dbReference>
<dbReference type="GO" id="GO:2000225">
    <property type="term" value="P:negative regulation of testosterone biosynthetic process"/>
    <property type="evidence" value="ECO:0000250"/>
    <property type="project" value="UniProtKB"/>
</dbReference>
<dbReference type="GO" id="GO:0007341">
    <property type="term" value="P:penetration of zona pellucida"/>
    <property type="evidence" value="ECO:0000250"/>
    <property type="project" value="UniProtKB"/>
</dbReference>
<dbReference type="GO" id="GO:0043065">
    <property type="term" value="P:positive regulation of apoptotic process"/>
    <property type="evidence" value="ECO:0000250"/>
    <property type="project" value="UniProtKB"/>
</dbReference>
<dbReference type="GO" id="GO:0045600">
    <property type="term" value="P:positive regulation of fat cell differentiation"/>
    <property type="evidence" value="ECO:0007669"/>
    <property type="project" value="Ensembl"/>
</dbReference>
<dbReference type="CDD" id="cd23006">
    <property type="entry name" value="Dkkl1"/>
    <property type="match status" value="1"/>
</dbReference>
<dbReference type="InterPro" id="IPR039863">
    <property type="entry name" value="DKK1-4"/>
</dbReference>
<dbReference type="InterPro" id="IPR049632">
    <property type="entry name" value="DKKL1"/>
</dbReference>
<dbReference type="PANTHER" id="PTHR12113:SF7">
    <property type="entry name" value="DICKKOPF-LIKE PROTEIN 1"/>
    <property type="match status" value="1"/>
</dbReference>
<dbReference type="PANTHER" id="PTHR12113">
    <property type="entry name" value="DICKKOPF3-LIKE 3"/>
    <property type="match status" value="1"/>
</dbReference>
<accession>Q9UK85</accession>
<keyword id="KW-0968">Cytoplasmic vesicle</keyword>
<keyword id="KW-0325">Glycoprotein</keyword>
<keyword id="KW-1267">Proteomics identification</keyword>
<keyword id="KW-1185">Reference proteome</keyword>
<keyword id="KW-0964">Secreted</keyword>
<keyword id="KW-0732">Signal</keyword>
<reference key="1">
    <citation type="journal article" date="1999" name="Gene">
        <title>Functional and structural diversity of the human Dickkopf gene family.</title>
        <authorList>
            <person name="Krupnik V.E."/>
            <person name="Sharp J.D."/>
            <person name="Jiang C."/>
            <person name="Robison K."/>
            <person name="Chickering T.W."/>
            <person name="Amaravadi L."/>
            <person name="Brown D.E."/>
            <person name="Guyot D."/>
            <person name="Mays G."/>
            <person name="Leiby K."/>
            <person name="Chang B."/>
            <person name="Duong T."/>
            <person name="Goodearl A.D.J."/>
            <person name="Gearing D.P."/>
            <person name="Sokol S.Y."/>
            <person name="McCarthy S.A."/>
        </authorList>
    </citation>
    <scope>NUCLEOTIDE SEQUENCE [MRNA]</scope>
</reference>
<reference key="2">
    <citation type="submission" date="2000-08" db="EMBL/GenBank/DDBJ databases">
        <title>Genomic organization of the human and mouse Soggy.</title>
        <authorList>
            <person name="Tate G."/>
        </authorList>
    </citation>
    <scope>NUCLEOTIDE SEQUENCE [GENOMIC DNA]</scope>
</reference>
<reference key="3">
    <citation type="journal article" date="2003" name="Genome Res.">
        <title>The secreted protein discovery initiative (SPDI), a large-scale effort to identify novel human secreted and transmembrane proteins: a bioinformatics assessment.</title>
        <authorList>
            <person name="Clark H.F."/>
            <person name="Gurney A.L."/>
            <person name="Abaya E."/>
            <person name="Baker K."/>
            <person name="Baldwin D.T."/>
            <person name="Brush J."/>
            <person name="Chen J."/>
            <person name="Chow B."/>
            <person name="Chui C."/>
            <person name="Crowley C."/>
            <person name="Currell B."/>
            <person name="Deuel B."/>
            <person name="Dowd P."/>
            <person name="Eaton D."/>
            <person name="Foster J.S."/>
            <person name="Grimaldi C."/>
            <person name="Gu Q."/>
            <person name="Hass P.E."/>
            <person name="Heldens S."/>
            <person name="Huang A."/>
            <person name="Kim H.S."/>
            <person name="Klimowski L."/>
            <person name="Jin Y."/>
            <person name="Johnson S."/>
            <person name="Lee J."/>
            <person name="Lewis L."/>
            <person name="Liao D."/>
            <person name="Mark M.R."/>
            <person name="Robbie E."/>
            <person name="Sanchez C."/>
            <person name="Schoenfeld J."/>
            <person name="Seshagiri S."/>
            <person name="Simmons L."/>
            <person name="Singh J."/>
            <person name="Smith V."/>
            <person name="Stinson J."/>
            <person name="Vagts A."/>
            <person name="Vandlen R.L."/>
            <person name="Watanabe C."/>
            <person name="Wieand D."/>
            <person name="Woods K."/>
            <person name="Xie M.-H."/>
            <person name="Yansura D.G."/>
            <person name="Yi S."/>
            <person name="Yu G."/>
            <person name="Yuan J."/>
            <person name="Zhang M."/>
            <person name="Zhang Z."/>
            <person name="Goddard A.D."/>
            <person name="Wood W.I."/>
            <person name="Godowski P.J."/>
            <person name="Gray A.M."/>
        </authorList>
    </citation>
    <scope>NUCLEOTIDE SEQUENCE [LARGE SCALE MRNA]</scope>
</reference>
<reference key="4">
    <citation type="journal article" date="2004" name="Genome Res.">
        <title>The status, quality, and expansion of the NIH full-length cDNA project: the Mammalian Gene Collection (MGC).</title>
        <authorList>
            <consortium name="The MGC Project Team"/>
        </authorList>
    </citation>
    <scope>NUCLEOTIDE SEQUENCE [LARGE SCALE MRNA]</scope>
    <source>
        <tissue>Testis</tissue>
    </source>
</reference>
<reference key="5">
    <citation type="journal article" date="2012" name="Reprod. Biol. Endocrinol.">
        <title>Developmental expression and function of DKKL1/Dkkl1 in humans and mice.</title>
        <authorList>
            <person name="Yan Q."/>
            <person name="Wu X."/>
            <person name="Chen C."/>
            <person name="Diao R."/>
            <person name="Lai Y."/>
            <person name="Huang J."/>
            <person name="Chen J."/>
            <person name="Yu Z."/>
            <person name="Gui Y."/>
            <person name="Tang A."/>
            <person name="Cai Z."/>
        </authorList>
    </citation>
    <scope>TISSUE SPECIFICITY</scope>
    <scope>INDUCTION</scope>
</reference>
<sequence length="242" mass="27007">MGEASPPAPARRHLLVLLLLLSTLVIPSAAAPIHDADAQESSLGLTGLQSLLQGFSRLFLKGNLLRGIDSLFSAPMDFRGLPGNYHKEENQEHQLGNNTLSSHLQIDKMTDNKTGEVLISENVVASIQPAEGSFEGDLKVPRMEEKEALVPIQKATDSFHTELHPRVAFWIIKLPRRRSHQDALEGGHWLSEKRHRLQAIRDGLRKGTHKDVLEEGTESSSHSRLSPRKTHLLYILRPSRQL</sequence>
<comment type="function">
    <text evidence="1">Involved in fertilization by facilitating sperm penetration of the zona pellucida. May promote spermatocyte apoptosis, thereby limiting sperm production. In adults, may reduce testosterone synthesis in Leydig cells. Is not essential either for development or fertility.</text>
</comment>
<comment type="subunit">
    <text evidence="1">Interacts with SLXL1; Co-localize in seminiferous tubules. Interacts with SLY.</text>
</comment>
<comment type="subcellular location">
    <subcellularLocation>
        <location evidence="1">Secreted</location>
    </subcellularLocation>
    <subcellularLocation>
        <location evidence="1">Cytoplasmic vesicle</location>
        <location evidence="1">Secretory vesicle</location>
        <location evidence="1">Acrosome</location>
    </subcellularLocation>
    <text evidence="1">Localized specifically to the crescent shaped acrosome at the apex of the sperm head.</text>
</comment>
<comment type="tissue specificity">
    <text evidence="3">More highly expressed in adult testis than in fetal testis. Exclusively expressed in the testis (at protein level). Intense expression in stages II, III and IV of spermatogenesis, whereas expression is lower in stage I.</text>
</comment>
<comment type="induction">
    <text evidence="3">Abnormal expression in testes of patients with male infertility.</text>
</comment>
<comment type="domain">
    <text>Contains a N-terminal domain similar to that of the N-terminal section of DKK3.</text>
</comment>
<comment type="PTM">
    <text evidence="1">N-glycosylated during spermatogenesis. Not N-glycosylated in mature sperm.</text>
</comment>
<gene>
    <name evidence="6" type="primary">DKKL1</name>
    <name evidence="6" type="synonym">SGY1</name>
    <name type="ORF">UNQ735/PRO1429</name>
</gene>
<name>DKKL1_HUMAN</name>
<proteinExistence type="evidence at protein level"/>
<organism>
    <name type="scientific">Homo sapiens</name>
    <name type="common">Human</name>
    <dbReference type="NCBI Taxonomy" id="9606"/>
    <lineage>
        <taxon>Eukaryota</taxon>
        <taxon>Metazoa</taxon>
        <taxon>Chordata</taxon>
        <taxon>Craniata</taxon>
        <taxon>Vertebrata</taxon>
        <taxon>Euteleostomi</taxon>
        <taxon>Mammalia</taxon>
        <taxon>Eutheria</taxon>
        <taxon>Euarchontoglires</taxon>
        <taxon>Primates</taxon>
        <taxon>Haplorrhini</taxon>
        <taxon>Catarrhini</taxon>
        <taxon>Hominidae</taxon>
        <taxon>Homo</taxon>
    </lineage>
</organism>
<evidence type="ECO:0000250" key="1">
    <source>
        <dbReference type="UniProtKB" id="Q9QZL9"/>
    </source>
</evidence>
<evidence type="ECO:0000255" key="2"/>
<evidence type="ECO:0000269" key="3">
    <source>
    </source>
</evidence>
<evidence type="ECO:0000303" key="4">
    <source>
    </source>
</evidence>
<evidence type="ECO:0000305" key="5"/>
<evidence type="ECO:0000312" key="6">
    <source>
        <dbReference type="HGNC" id="HGNC:16528"/>
    </source>
</evidence>
<protein>
    <recommendedName>
        <fullName evidence="5">Dickkopf-like protein 1</fullName>
    </recommendedName>
    <alternativeName>
        <fullName>Cancer/testis antigen 34</fullName>
        <shortName>CT34</shortName>
    </alternativeName>
    <alternativeName>
        <fullName>Protein soggy-1</fullName>
        <shortName evidence="4">SGY-1</shortName>
    </alternativeName>
</protein>
<feature type="signal peptide" evidence="2">
    <location>
        <begin position="1"/>
        <end position="30"/>
    </location>
</feature>
<feature type="chain" id="PRO_0000007228" description="Dickkopf-like protein 1">
    <location>
        <begin position="31"/>
        <end position="242"/>
    </location>
</feature>
<feature type="glycosylation site" description="N-linked (GlcNAc...) asparagine" evidence="2">
    <location>
        <position position="97"/>
    </location>
</feature>
<feature type="glycosylation site" description="N-linked (GlcNAc...) asparagine" evidence="2">
    <location>
        <position position="112"/>
    </location>
</feature>
<feature type="sequence variant" id="VAR_053061" description="In dbSNP:rs2303757.">
    <original>L</original>
    <variation>R</variation>
    <location>
        <position position="24"/>
    </location>
</feature>
<feature type="sequence variant" id="VAR_024432" description="In dbSNP:rs919364.">
    <original>A</original>
    <variation>T</variation>
    <location>
        <position position="29"/>
    </location>
</feature>
<feature type="sequence variant" id="VAR_053062" description="In dbSNP:rs35693137.">
    <original>L</original>
    <variation>I</variation>
    <location>
        <position position="104"/>
    </location>
</feature>
<feature type="sequence variant" id="VAR_021967" description="In dbSNP:rs2303759.">
    <original>M</original>
    <variation>R</variation>
    <location>
        <position position="109"/>
    </location>
</feature>
<feature type="sequence variant" id="VAR_053063" description="In dbSNP:rs1054770.">
    <original>G</original>
    <variation>S</variation>
    <location>
        <position position="187"/>
    </location>
</feature>
<feature type="sequence variant" id="VAR_021968" description="In dbSNP:rs2288481.">
    <original>E</original>
    <variation>K</variation>
    <location>
        <position position="214"/>
    </location>
</feature>